<dbReference type="EC" id="4.4.1.21" evidence="1"/>
<dbReference type="EMBL" id="CP000447">
    <property type="protein sequence ID" value="ABI70800.1"/>
    <property type="molecule type" value="Genomic_DNA"/>
</dbReference>
<dbReference type="RefSeq" id="WP_011636421.1">
    <property type="nucleotide sequence ID" value="NC_008345.1"/>
</dbReference>
<dbReference type="SMR" id="Q086L5"/>
<dbReference type="STRING" id="318167.Sfri_0947"/>
<dbReference type="KEGG" id="sfr:Sfri_0947"/>
<dbReference type="eggNOG" id="COG1854">
    <property type="taxonomic scope" value="Bacteria"/>
</dbReference>
<dbReference type="HOGENOM" id="CLU_107531_2_0_6"/>
<dbReference type="OrthoDB" id="9788129at2"/>
<dbReference type="Proteomes" id="UP000000684">
    <property type="component" value="Chromosome"/>
</dbReference>
<dbReference type="GO" id="GO:0005506">
    <property type="term" value="F:iron ion binding"/>
    <property type="evidence" value="ECO:0007669"/>
    <property type="project" value="InterPro"/>
</dbReference>
<dbReference type="GO" id="GO:0043768">
    <property type="term" value="F:S-ribosylhomocysteine lyase activity"/>
    <property type="evidence" value="ECO:0007669"/>
    <property type="project" value="UniProtKB-UniRule"/>
</dbReference>
<dbReference type="GO" id="GO:0009372">
    <property type="term" value="P:quorum sensing"/>
    <property type="evidence" value="ECO:0007669"/>
    <property type="project" value="UniProtKB-UniRule"/>
</dbReference>
<dbReference type="Gene3D" id="3.30.1360.80">
    <property type="entry name" value="S-ribosylhomocysteinase (LuxS)"/>
    <property type="match status" value="1"/>
</dbReference>
<dbReference type="HAMAP" id="MF_00091">
    <property type="entry name" value="LuxS"/>
    <property type="match status" value="1"/>
</dbReference>
<dbReference type="InterPro" id="IPR037005">
    <property type="entry name" value="LuxS_sf"/>
</dbReference>
<dbReference type="InterPro" id="IPR011249">
    <property type="entry name" value="Metalloenz_LuxS/M16"/>
</dbReference>
<dbReference type="InterPro" id="IPR003815">
    <property type="entry name" value="S-ribosylhomocysteinase"/>
</dbReference>
<dbReference type="NCBIfam" id="NF002602">
    <property type="entry name" value="PRK02260.1-2"/>
    <property type="match status" value="1"/>
</dbReference>
<dbReference type="PANTHER" id="PTHR35799">
    <property type="entry name" value="S-RIBOSYLHOMOCYSTEINE LYASE"/>
    <property type="match status" value="1"/>
</dbReference>
<dbReference type="PANTHER" id="PTHR35799:SF1">
    <property type="entry name" value="S-RIBOSYLHOMOCYSTEINE LYASE"/>
    <property type="match status" value="1"/>
</dbReference>
<dbReference type="Pfam" id="PF02664">
    <property type="entry name" value="LuxS"/>
    <property type="match status" value="1"/>
</dbReference>
<dbReference type="PIRSF" id="PIRSF006160">
    <property type="entry name" value="AI2"/>
    <property type="match status" value="1"/>
</dbReference>
<dbReference type="PRINTS" id="PR01487">
    <property type="entry name" value="LUXSPROTEIN"/>
</dbReference>
<dbReference type="SUPFAM" id="SSF63411">
    <property type="entry name" value="LuxS/MPP-like metallohydrolase"/>
    <property type="match status" value="1"/>
</dbReference>
<reference key="1">
    <citation type="submission" date="2006-08" db="EMBL/GenBank/DDBJ databases">
        <title>Complete sequence of Shewanella frigidimarina NCIMB 400.</title>
        <authorList>
            <consortium name="US DOE Joint Genome Institute"/>
            <person name="Copeland A."/>
            <person name="Lucas S."/>
            <person name="Lapidus A."/>
            <person name="Barry K."/>
            <person name="Detter J.C."/>
            <person name="Glavina del Rio T."/>
            <person name="Hammon N."/>
            <person name="Israni S."/>
            <person name="Dalin E."/>
            <person name="Tice H."/>
            <person name="Pitluck S."/>
            <person name="Fredrickson J.K."/>
            <person name="Kolker E."/>
            <person name="McCuel L.A."/>
            <person name="DiChristina T."/>
            <person name="Nealson K.H."/>
            <person name="Newman D."/>
            <person name="Tiedje J.M."/>
            <person name="Zhou J."/>
            <person name="Romine M.F."/>
            <person name="Culley D.E."/>
            <person name="Serres M."/>
            <person name="Chertkov O."/>
            <person name="Brettin T."/>
            <person name="Bruce D."/>
            <person name="Han C."/>
            <person name="Tapia R."/>
            <person name="Gilna P."/>
            <person name="Schmutz J."/>
            <person name="Larimer F."/>
            <person name="Land M."/>
            <person name="Hauser L."/>
            <person name="Kyrpides N."/>
            <person name="Mikhailova N."/>
            <person name="Richardson P."/>
        </authorList>
    </citation>
    <scope>NUCLEOTIDE SEQUENCE [LARGE SCALE GENOMIC DNA]</scope>
    <source>
        <strain>NCIMB 400</strain>
    </source>
</reference>
<comment type="function">
    <text evidence="1">Involved in the synthesis of autoinducer 2 (AI-2) which is secreted by bacteria and is used to communicate both the cell density and the metabolic potential of the environment. The regulation of gene expression in response to changes in cell density is called quorum sensing. Catalyzes the transformation of S-ribosylhomocysteine (RHC) to homocysteine (HC) and 4,5-dihydroxy-2,3-pentadione (DPD).</text>
</comment>
<comment type="catalytic activity">
    <reaction evidence="1">
        <text>S-(5-deoxy-D-ribos-5-yl)-L-homocysteine = (S)-4,5-dihydroxypentane-2,3-dione + L-homocysteine</text>
        <dbReference type="Rhea" id="RHEA:17753"/>
        <dbReference type="ChEBI" id="CHEBI:29484"/>
        <dbReference type="ChEBI" id="CHEBI:58195"/>
        <dbReference type="ChEBI" id="CHEBI:58199"/>
        <dbReference type="EC" id="4.4.1.21"/>
    </reaction>
</comment>
<comment type="cofactor">
    <cofactor evidence="1">
        <name>Fe cation</name>
        <dbReference type="ChEBI" id="CHEBI:24875"/>
    </cofactor>
    <text evidence="1">Binds 1 Fe cation per subunit.</text>
</comment>
<comment type="subunit">
    <text evidence="1">Homodimer.</text>
</comment>
<comment type="similarity">
    <text evidence="1">Belongs to the LuxS family.</text>
</comment>
<evidence type="ECO:0000255" key="1">
    <source>
        <dbReference type="HAMAP-Rule" id="MF_00091"/>
    </source>
</evidence>
<organism>
    <name type="scientific">Shewanella frigidimarina (strain NCIMB 400)</name>
    <dbReference type="NCBI Taxonomy" id="318167"/>
    <lineage>
        <taxon>Bacteria</taxon>
        <taxon>Pseudomonadati</taxon>
        <taxon>Pseudomonadota</taxon>
        <taxon>Gammaproteobacteria</taxon>
        <taxon>Alteromonadales</taxon>
        <taxon>Shewanellaceae</taxon>
        <taxon>Shewanella</taxon>
    </lineage>
</organism>
<name>LUXS_SHEFN</name>
<sequence length="169" mass="18695">MPLLDSFTVDHTRMNAPAVRVAKHMSTPSGDAITVFDLRFCAPNKDILSERGIHTLEHLFAGFMREHLNGDGIEIIDISPMGCRTGFYMSLIGQPTESKVADSWLAAMVDVTNVIDQKDIPELNEYQCGTYEMHSLEQAQDIARMIIAAGVSVNQNDDLKLSDEILGNL</sequence>
<accession>Q086L5</accession>
<feature type="chain" id="PRO_0000298024" description="S-ribosylhomocysteine lyase">
    <location>
        <begin position="1"/>
        <end position="169"/>
    </location>
</feature>
<feature type="binding site" evidence="1">
    <location>
        <position position="54"/>
    </location>
    <ligand>
        <name>Fe cation</name>
        <dbReference type="ChEBI" id="CHEBI:24875"/>
    </ligand>
</feature>
<feature type="binding site" evidence="1">
    <location>
        <position position="58"/>
    </location>
    <ligand>
        <name>Fe cation</name>
        <dbReference type="ChEBI" id="CHEBI:24875"/>
    </ligand>
</feature>
<feature type="binding site" evidence="1">
    <location>
        <position position="128"/>
    </location>
    <ligand>
        <name>Fe cation</name>
        <dbReference type="ChEBI" id="CHEBI:24875"/>
    </ligand>
</feature>
<proteinExistence type="inferred from homology"/>
<keyword id="KW-0071">Autoinducer synthesis</keyword>
<keyword id="KW-0408">Iron</keyword>
<keyword id="KW-0456">Lyase</keyword>
<keyword id="KW-0479">Metal-binding</keyword>
<keyword id="KW-0673">Quorum sensing</keyword>
<keyword id="KW-1185">Reference proteome</keyword>
<protein>
    <recommendedName>
        <fullName evidence="1">S-ribosylhomocysteine lyase</fullName>
        <ecNumber evidence="1">4.4.1.21</ecNumber>
    </recommendedName>
    <alternativeName>
        <fullName evidence="1">AI-2 synthesis protein</fullName>
    </alternativeName>
    <alternativeName>
        <fullName evidence="1">Autoinducer-2 production protein LuxS</fullName>
    </alternativeName>
</protein>
<gene>
    <name evidence="1" type="primary">luxS</name>
    <name type="ordered locus">Sfri_0947</name>
</gene>